<name>MQO4_STAES</name>
<dbReference type="EC" id="1.1.5.4" evidence="1"/>
<dbReference type="EMBL" id="AE015929">
    <property type="protein sequence ID" value="AAO05800.1"/>
    <property type="molecule type" value="Genomic_DNA"/>
</dbReference>
<dbReference type="RefSeq" id="NP_765713.1">
    <property type="nucleotide sequence ID" value="NC_004461.1"/>
</dbReference>
<dbReference type="SMR" id="Q8CMY4"/>
<dbReference type="KEGG" id="sep:SE_2158"/>
<dbReference type="PATRIC" id="fig|176280.10.peg.2108"/>
<dbReference type="eggNOG" id="COG0579">
    <property type="taxonomic scope" value="Bacteria"/>
</dbReference>
<dbReference type="HOGENOM" id="CLU_028151_0_0_9"/>
<dbReference type="OrthoDB" id="9763983at2"/>
<dbReference type="UniPathway" id="UPA00223">
    <property type="reaction ID" value="UER01008"/>
</dbReference>
<dbReference type="Proteomes" id="UP000001411">
    <property type="component" value="Chromosome"/>
</dbReference>
<dbReference type="GO" id="GO:0047545">
    <property type="term" value="F:2-hydroxyglutarate dehydrogenase activity"/>
    <property type="evidence" value="ECO:0007669"/>
    <property type="project" value="TreeGrafter"/>
</dbReference>
<dbReference type="GO" id="GO:0008924">
    <property type="term" value="F:L-malate dehydrogenase (quinone) activity"/>
    <property type="evidence" value="ECO:0007669"/>
    <property type="project" value="UniProtKB-UniRule"/>
</dbReference>
<dbReference type="GO" id="GO:0006099">
    <property type="term" value="P:tricarboxylic acid cycle"/>
    <property type="evidence" value="ECO:0007669"/>
    <property type="project" value="UniProtKB-UniRule"/>
</dbReference>
<dbReference type="Gene3D" id="3.50.50.60">
    <property type="entry name" value="FAD/NAD(P)-binding domain"/>
    <property type="match status" value="1"/>
</dbReference>
<dbReference type="HAMAP" id="MF_00212">
    <property type="entry name" value="MQO"/>
    <property type="match status" value="1"/>
</dbReference>
<dbReference type="InterPro" id="IPR036188">
    <property type="entry name" value="FAD/NAD-bd_sf"/>
</dbReference>
<dbReference type="InterPro" id="IPR006231">
    <property type="entry name" value="MQO"/>
</dbReference>
<dbReference type="NCBIfam" id="NF040844">
    <property type="entry name" value="Lac_Quin_Ox_NO"/>
    <property type="match status" value="1"/>
</dbReference>
<dbReference type="NCBIfam" id="TIGR01320">
    <property type="entry name" value="mal_quin_oxido"/>
    <property type="match status" value="1"/>
</dbReference>
<dbReference type="NCBIfam" id="NF003604">
    <property type="entry name" value="PRK05257.1-3"/>
    <property type="match status" value="1"/>
</dbReference>
<dbReference type="NCBIfam" id="NF003606">
    <property type="entry name" value="PRK05257.2-1"/>
    <property type="match status" value="1"/>
</dbReference>
<dbReference type="NCBIfam" id="NF003611">
    <property type="entry name" value="PRK05257.3-2"/>
    <property type="match status" value="1"/>
</dbReference>
<dbReference type="NCBIfam" id="NF009875">
    <property type="entry name" value="PRK13339.1"/>
    <property type="match status" value="1"/>
</dbReference>
<dbReference type="PANTHER" id="PTHR43104">
    <property type="entry name" value="L-2-HYDROXYGLUTARATE DEHYDROGENASE, MITOCHONDRIAL"/>
    <property type="match status" value="1"/>
</dbReference>
<dbReference type="PANTHER" id="PTHR43104:SF2">
    <property type="entry name" value="L-2-HYDROXYGLUTARATE DEHYDROGENASE, MITOCHONDRIAL"/>
    <property type="match status" value="1"/>
</dbReference>
<dbReference type="Pfam" id="PF06039">
    <property type="entry name" value="Mqo"/>
    <property type="match status" value="1"/>
</dbReference>
<dbReference type="SUPFAM" id="SSF51905">
    <property type="entry name" value="FAD/NAD(P)-binding domain"/>
    <property type="match status" value="1"/>
</dbReference>
<feature type="chain" id="PRO_0000128752" description="Probable malate:quinone oxidoreductase 4">
    <location>
        <begin position="1"/>
        <end position="499"/>
    </location>
</feature>
<evidence type="ECO:0000255" key="1">
    <source>
        <dbReference type="HAMAP-Rule" id="MF_00212"/>
    </source>
</evidence>
<reference key="1">
    <citation type="journal article" date="2003" name="Mol. Microbiol.">
        <title>Genome-based analysis of virulence genes in a non-biofilm-forming Staphylococcus epidermidis strain (ATCC 12228).</title>
        <authorList>
            <person name="Zhang Y.-Q."/>
            <person name="Ren S.-X."/>
            <person name="Li H.-L."/>
            <person name="Wang Y.-X."/>
            <person name="Fu G."/>
            <person name="Yang J."/>
            <person name="Qin Z.-Q."/>
            <person name="Miao Y.-G."/>
            <person name="Wang W.-Y."/>
            <person name="Chen R.-S."/>
            <person name="Shen Y."/>
            <person name="Chen Z."/>
            <person name="Yuan Z.-H."/>
            <person name="Zhao G.-P."/>
            <person name="Qu D."/>
            <person name="Danchin A."/>
            <person name="Wen Y.-M."/>
        </authorList>
    </citation>
    <scope>NUCLEOTIDE SEQUENCE [LARGE SCALE GENOMIC DNA]</scope>
    <source>
        <strain>ATCC 12228 / FDA PCI 1200</strain>
    </source>
</reference>
<sequence>MAMSDKKDVVLIGAGVLSTTFGSMLKTIAPDWDIHLYERLDRPGIESSNERNNAGTGHAALCELNYTVQQPDGSIDIEKAKEINEQFEISKQFWGHLVKSGEIQNPKEFINPLPHISFVRGKNNVKFLKDRYEAMKQFPMFDNIEYTEDIEEMRKWIPLMMKGREDKGYMAASKIDEGTDVNYGELTRKMAQNLKNSPNVEVQYKHEVVDFERLSNGKWSVKIKNLNNGQVFEHQTDYVFIGAGGGAIPLLQKTGIPESKHLGGFPISGQFIACTNPQVIEQHDAKVYGKEPPGTPPMTVPHLDTRYIDGERTLLFGPFANVGPKFLKHGSNLDLFKSIKPYNITTLLASAVKNLPLIKYSFDQVIMTKEGCMNHLRTFYPEARDEDWQVYTAGKRVQVIKDTEENGKGFIQFGTEVVNSEDHSVIALLGESPGASTSVSVALEVLEKNFPEYAKDWEPKIKKMIPSYGESLIDDVQLMRKIRKQTSKDLELGFYNKAK</sequence>
<accession>Q8CMY4</accession>
<gene>
    <name evidence="1" type="primary">mqo4</name>
    <name type="ordered locus">SE_2158</name>
</gene>
<protein>
    <recommendedName>
        <fullName evidence="1">Probable malate:quinone oxidoreductase 4</fullName>
        <ecNumber evidence="1">1.1.5.4</ecNumber>
    </recommendedName>
    <alternativeName>
        <fullName evidence="1">MQO 4</fullName>
    </alternativeName>
    <alternativeName>
        <fullName evidence="1">Malate dehydrogenase [quinone] 4</fullName>
    </alternativeName>
</protein>
<comment type="catalytic activity">
    <reaction evidence="1">
        <text>(S)-malate + a quinone = a quinol + oxaloacetate</text>
        <dbReference type="Rhea" id="RHEA:46012"/>
        <dbReference type="ChEBI" id="CHEBI:15589"/>
        <dbReference type="ChEBI" id="CHEBI:16452"/>
        <dbReference type="ChEBI" id="CHEBI:24646"/>
        <dbReference type="ChEBI" id="CHEBI:132124"/>
        <dbReference type="EC" id="1.1.5.4"/>
    </reaction>
</comment>
<comment type="cofactor">
    <cofactor evidence="1">
        <name>FAD</name>
        <dbReference type="ChEBI" id="CHEBI:57692"/>
    </cofactor>
</comment>
<comment type="pathway">
    <text evidence="1">Carbohydrate metabolism; tricarboxylic acid cycle; oxaloacetate from (S)-malate (quinone route): step 1/1.</text>
</comment>
<comment type="similarity">
    <text evidence="1">Belongs to the MQO family.</text>
</comment>
<organism>
    <name type="scientific">Staphylococcus epidermidis (strain ATCC 12228 / FDA PCI 1200)</name>
    <dbReference type="NCBI Taxonomy" id="176280"/>
    <lineage>
        <taxon>Bacteria</taxon>
        <taxon>Bacillati</taxon>
        <taxon>Bacillota</taxon>
        <taxon>Bacilli</taxon>
        <taxon>Bacillales</taxon>
        <taxon>Staphylococcaceae</taxon>
        <taxon>Staphylococcus</taxon>
    </lineage>
</organism>
<keyword id="KW-0274">FAD</keyword>
<keyword id="KW-0285">Flavoprotein</keyword>
<keyword id="KW-0560">Oxidoreductase</keyword>
<keyword id="KW-0816">Tricarboxylic acid cycle</keyword>
<proteinExistence type="inferred from homology"/>